<accession>D3UMA1</accession>
<dbReference type="EMBL" id="FN557490">
    <property type="protein sequence ID" value="CBH27234.1"/>
    <property type="molecule type" value="Genomic_DNA"/>
</dbReference>
<dbReference type="SMR" id="D3UMA1"/>
<dbReference type="KEGG" id="lsg:lse_1083"/>
<dbReference type="HOGENOM" id="CLU_052508_3_0_9"/>
<dbReference type="UniPathway" id="UPA00148"/>
<dbReference type="GO" id="GO:0043190">
    <property type="term" value="C:ATP-binding cassette (ABC) transporter complex"/>
    <property type="evidence" value="ECO:0007669"/>
    <property type="project" value="InterPro"/>
</dbReference>
<dbReference type="GO" id="GO:0015087">
    <property type="term" value="F:cobalt ion transmembrane transporter activity"/>
    <property type="evidence" value="ECO:0007669"/>
    <property type="project" value="UniProtKB-UniRule"/>
</dbReference>
<dbReference type="GO" id="GO:0009236">
    <property type="term" value="P:cobalamin biosynthetic process"/>
    <property type="evidence" value="ECO:0007669"/>
    <property type="project" value="UniProtKB-UniRule"/>
</dbReference>
<dbReference type="FunFam" id="1.10.1760.20:FF:000001">
    <property type="entry name" value="Cobalt transport protein CbiM"/>
    <property type="match status" value="1"/>
</dbReference>
<dbReference type="Gene3D" id="1.10.1760.20">
    <property type="match status" value="1"/>
</dbReference>
<dbReference type="HAMAP" id="MF_01462">
    <property type="entry name" value="CbiM"/>
    <property type="match status" value="1"/>
</dbReference>
<dbReference type="InterPro" id="IPR018024">
    <property type="entry name" value="CbiM"/>
</dbReference>
<dbReference type="InterPro" id="IPR002751">
    <property type="entry name" value="CbiM/NikMN"/>
</dbReference>
<dbReference type="NCBIfam" id="TIGR00123">
    <property type="entry name" value="cbiM"/>
    <property type="match status" value="1"/>
</dbReference>
<dbReference type="NCBIfam" id="NF006184">
    <property type="entry name" value="PRK08319.1"/>
    <property type="match status" value="1"/>
</dbReference>
<dbReference type="PANTHER" id="PTHR43627">
    <property type="match status" value="1"/>
</dbReference>
<dbReference type="PANTHER" id="PTHR43627:SF1">
    <property type="entry name" value="COBALT TRANSPORT PROTEIN CBIM"/>
    <property type="match status" value="1"/>
</dbReference>
<dbReference type="Pfam" id="PF01891">
    <property type="entry name" value="CbiM"/>
    <property type="match status" value="1"/>
</dbReference>
<gene>
    <name evidence="1" type="primary">cbiM</name>
    <name type="ordered locus">lse_1083</name>
</gene>
<evidence type="ECO:0000255" key="1">
    <source>
        <dbReference type="HAMAP-Rule" id="MF_01462"/>
    </source>
</evidence>
<proteinExistence type="inferred from homology"/>
<sequence>MKKLWKFIPFVLMGVIYFTLTNPESAHAMHIMEGFLPVKWAVFWLIVFIPFLVLGLIRIRKLIAIDKNNKLLLALCAAFIFVLSALKIPSVTGSCSHPTGVGLATVMFGPLVVSVLGVIVLLFQALLLAHGGITTLGANAMSMAVIGPMVGFVVYKLARKLNCNKSVSIFLCAMTADLATYFTTSVQLGVVFPDPASGMMASILKFMAIFCVTQVPIAIAEGLLTVVMYNLISKNLPEKVAQLR</sequence>
<name>CBIM_LISSS</name>
<protein>
    <recommendedName>
        <fullName evidence="1">Cobalt transport protein CbiM</fullName>
    </recommendedName>
    <alternativeName>
        <fullName evidence="1">Energy-coupling factor transporter probable substrate-capture protein CbiM</fullName>
        <shortName evidence="1">ECF transporter S component CbiM</shortName>
    </alternativeName>
</protein>
<feature type="signal peptide" evidence="1">
    <location>
        <begin position="1"/>
        <end position="28"/>
    </location>
</feature>
<feature type="chain" id="PRO_0000411142" description="Cobalt transport protein CbiM">
    <location>
        <begin position="29"/>
        <end position="244"/>
    </location>
</feature>
<feature type="transmembrane region" description="Helical" evidence="1">
    <location>
        <begin position="37"/>
        <end position="57"/>
    </location>
</feature>
<feature type="transmembrane region" description="Helical" evidence="1">
    <location>
        <begin position="71"/>
        <end position="91"/>
    </location>
</feature>
<feature type="transmembrane region" description="Helical" evidence="1">
    <location>
        <begin position="103"/>
        <end position="123"/>
    </location>
</feature>
<feature type="transmembrane region" description="Helical" evidence="1">
    <location>
        <begin position="135"/>
        <end position="155"/>
    </location>
</feature>
<feature type="transmembrane region" description="Helical" evidence="1">
    <location>
        <begin position="166"/>
        <end position="186"/>
    </location>
</feature>
<feature type="transmembrane region" description="Helical" evidence="1">
    <location>
        <begin position="206"/>
        <end position="226"/>
    </location>
</feature>
<reference key="1">
    <citation type="journal article" date="2010" name="J. Bacteriol.">
        <title>Complete genome sequence of Listeria seeligeri, a nonpathogenic member of the genus Listeria.</title>
        <authorList>
            <person name="Steinweg C."/>
            <person name="Kuenne C.T."/>
            <person name="Billion A."/>
            <person name="Mraheil M.A."/>
            <person name="Domann E."/>
            <person name="Ghai R."/>
            <person name="Barbuddhe S.B."/>
            <person name="Karst U."/>
            <person name="Goesmann A."/>
            <person name="Puhler A."/>
            <person name="Weisshaar B."/>
            <person name="Wehland J."/>
            <person name="Lampidis R."/>
            <person name="Kreft J."/>
            <person name="Goebel W."/>
            <person name="Chakraborty T."/>
            <person name="Hain T."/>
        </authorList>
    </citation>
    <scope>NUCLEOTIDE SEQUENCE [LARGE SCALE GENOMIC DNA]</scope>
    <source>
        <strain>ATCC 35967 / DSM 20751 / CCM 3970 / CCUG 15530 / CIP 100100 / LMG 11386 / NCTC 11856 / SLCC 3954 / 1120</strain>
    </source>
</reference>
<organism>
    <name type="scientific">Listeria seeligeri serovar 1/2b (strain ATCC 35967 / DSM 20751 / CCM 3970 / CCUG 15530 / CIP 100100 / LMG 11386 / NCTC 11856 / SLCC 3954 / 1120)</name>
    <dbReference type="NCBI Taxonomy" id="683837"/>
    <lineage>
        <taxon>Bacteria</taxon>
        <taxon>Bacillati</taxon>
        <taxon>Bacillota</taxon>
        <taxon>Bacilli</taxon>
        <taxon>Bacillales</taxon>
        <taxon>Listeriaceae</taxon>
        <taxon>Listeria</taxon>
    </lineage>
</organism>
<keyword id="KW-1003">Cell membrane</keyword>
<keyword id="KW-0169">Cobalamin biosynthesis</keyword>
<keyword id="KW-0170">Cobalt</keyword>
<keyword id="KW-0171">Cobalt transport</keyword>
<keyword id="KW-0406">Ion transport</keyword>
<keyword id="KW-0472">Membrane</keyword>
<keyword id="KW-0732">Signal</keyword>
<keyword id="KW-0812">Transmembrane</keyword>
<keyword id="KW-1133">Transmembrane helix</keyword>
<keyword id="KW-0813">Transport</keyword>
<comment type="function">
    <text evidence="1">Part of the energy-coupling factor (ECF) transporter complex CbiMNOQ involved in cobalt import.</text>
</comment>
<comment type="pathway">
    <text evidence="1">Cofactor biosynthesis; adenosylcobalamin biosynthesis.</text>
</comment>
<comment type="subunit">
    <text evidence="1">Forms an energy-coupling factor (ECF) transporter complex composed of an ATP-binding protein (A component, CbiO), a transmembrane protein (T component, CbiQ) and 2 possible substrate-capture proteins (S components, CbiM and CbiN) of unknown stoichimetry.</text>
</comment>
<comment type="subcellular location">
    <subcellularLocation>
        <location evidence="1">Cell membrane</location>
        <topology evidence="1">Multi-pass membrane protein</topology>
    </subcellularLocation>
</comment>
<comment type="similarity">
    <text evidence="1">Belongs to the CbiM family.</text>
</comment>